<reference key="1">
    <citation type="journal article" date="1995" name="Mol. Phylogenet. Evol.">
        <title>Phylogenetic analysis of tufA sequences indicates a cyanobacterial origin of all plastids.</title>
        <authorList>
            <person name="Delwiche C.F."/>
            <person name="Kuhsel M."/>
            <person name="Palmer J.D."/>
        </authorList>
    </citation>
    <scope>NUCLEOTIDE SEQUENCE [GENOMIC DNA]</scope>
    <source>
        <strain>ATCC 29409 / PCC 7375</strain>
    </source>
</reference>
<dbReference type="EC" id="3.6.5.3" evidence="2"/>
<dbReference type="EMBL" id="U09443">
    <property type="protein sequence ID" value="AAA87698.1"/>
    <property type="molecule type" value="Genomic_DNA"/>
</dbReference>
<dbReference type="SMR" id="P50065"/>
<dbReference type="GO" id="GO:0005829">
    <property type="term" value="C:cytosol"/>
    <property type="evidence" value="ECO:0007669"/>
    <property type="project" value="TreeGrafter"/>
</dbReference>
<dbReference type="GO" id="GO:0005525">
    <property type="term" value="F:GTP binding"/>
    <property type="evidence" value="ECO:0007669"/>
    <property type="project" value="UniProtKB-KW"/>
</dbReference>
<dbReference type="GO" id="GO:0003924">
    <property type="term" value="F:GTPase activity"/>
    <property type="evidence" value="ECO:0007669"/>
    <property type="project" value="InterPro"/>
</dbReference>
<dbReference type="GO" id="GO:0003746">
    <property type="term" value="F:translation elongation factor activity"/>
    <property type="evidence" value="ECO:0007669"/>
    <property type="project" value="UniProtKB-KW"/>
</dbReference>
<dbReference type="CDD" id="cd03697">
    <property type="entry name" value="EFTU_II"/>
    <property type="match status" value="1"/>
</dbReference>
<dbReference type="FunFam" id="2.40.30.10:FF:000001">
    <property type="entry name" value="Elongation factor Tu"/>
    <property type="match status" value="1"/>
</dbReference>
<dbReference type="Gene3D" id="3.40.50.300">
    <property type="entry name" value="P-loop containing nucleotide triphosphate hydrolases"/>
    <property type="match status" value="1"/>
</dbReference>
<dbReference type="Gene3D" id="2.40.30.10">
    <property type="entry name" value="Translation factors"/>
    <property type="match status" value="1"/>
</dbReference>
<dbReference type="InterPro" id="IPR050055">
    <property type="entry name" value="EF-Tu_GTPase"/>
</dbReference>
<dbReference type="InterPro" id="IPR004161">
    <property type="entry name" value="EFTu-like_2"/>
</dbReference>
<dbReference type="InterPro" id="IPR033720">
    <property type="entry name" value="EFTU_2"/>
</dbReference>
<dbReference type="InterPro" id="IPR027417">
    <property type="entry name" value="P-loop_NTPase"/>
</dbReference>
<dbReference type="InterPro" id="IPR000795">
    <property type="entry name" value="T_Tr_GTP-bd_dom"/>
</dbReference>
<dbReference type="InterPro" id="IPR009000">
    <property type="entry name" value="Transl_B-barrel_sf"/>
</dbReference>
<dbReference type="PANTHER" id="PTHR43721:SF22">
    <property type="entry name" value="ELONGATION FACTOR TU, MITOCHONDRIAL"/>
    <property type="match status" value="1"/>
</dbReference>
<dbReference type="PANTHER" id="PTHR43721">
    <property type="entry name" value="ELONGATION FACTOR TU-RELATED"/>
    <property type="match status" value="1"/>
</dbReference>
<dbReference type="Pfam" id="PF00009">
    <property type="entry name" value="GTP_EFTU"/>
    <property type="match status" value="1"/>
</dbReference>
<dbReference type="Pfam" id="PF03144">
    <property type="entry name" value="GTP_EFTU_D2"/>
    <property type="match status" value="1"/>
</dbReference>
<dbReference type="PRINTS" id="PR00315">
    <property type="entry name" value="ELONGATNFCT"/>
</dbReference>
<dbReference type="SUPFAM" id="SSF52540">
    <property type="entry name" value="P-loop containing nucleoside triphosphate hydrolases"/>
    <property type="match status" value="1"/>
</dbReference>
<dbReference type="SUPFAM" id="SSF50447">
    <property type="entry name" value="Translation proteins"/>
    <property type="match status" value="1"/>
</dbReference>
<dbReference type="PROSITE" id="PS51722">
    <property type="entry name" value="G_TR_2"/>
    <property type="match status" value="1"/>
</dbReference>
<sequence length="235" mass="25492">KNMITGAAQMDGAILVCSAADGPMPQTREHILLSKQVGVPHIVVFLNKQDQVDDEELLELVELEVRELLSSYDFPGDDIPIVAGSALKAVEALQANSSIGKGEDEWVDKIHDLVAQVDEYIPAPERDIDKPFLMAVEDVFSITGRGTVATGRIERGKVKVGEQIEIVGIRDTTQSTVTGVEMFQKTLDEGMAGDNVGVLLRGIQKEDILRGMVLAKPGSITPHTKFEAEVYVLIG</sequence>
<organism>
    <name type="scientific">Leptolyngbya ectocarpi</name>
    <name type="common">Phormidium ectocarpi</name>
    <dbReference type="NCBI Taxonomy" id="1202"/>
    <lineage>
        <taxon>Bacteria</taxon>
        <taxon>Bacillati</taxon>
        <taxon>Cyanobacteriota</taxon>
        <taxon>Cyanophyceae</taxon>
        <taxon>Leptolyngbyales</taxon>
        <taxon>Leptolyngbyaceae</taxon>
        <taxon>Leptolyngbya group</taxon>
        <taxon>Leptolyngbya</taxon>
    </lineage>
</organism>
<accession>P50065</accession>
<evidence type="ECO:0000250" key="1"/>
<evidence type="ECO:0000255" key="2">
    <source>
        <dbReference type="HAMAP-Rule" id="MF_00118"/>
    </source>
</evidence>
<evidence type="ECO:0000255" key="3">
    <source>
        <dbReference type="PROSITE-ProRule" id="PRU01059"/>
    </source>
</evidence>
<keyword id="KW-0963">Cytoplasm</keyword>
<keyword id="KW-0251">Elongation factor</keyword>
<keyword id="KW-0342">GTP-binding</keyword>
<keyword id="KW-0378">Hydrolase</keyword>
<keyword id="KW-0547">Nucleotide-binding</keyword>
<keyword id="KW-0648">Protein biosynthesis</keyword>
<proteinExistence type="inferred from homology"/>
<feature type="chain" id="PRO_0000091361" description="Elongation factor Tu">
    <location>
        <begin position="1" status="less than"/>
        <end position="235" status="greater than"/>
    </location>
</feature>
<feature type="domain" description="tr-type G" evidence="3">
    <location>
        <begin position="1" status="less than"/>
        <end position="125"/>
    </location>
</feature>
<feature type="binding site" evidence="1">
    <location>
        <begin position="47"/>
        <end position="50"/>
    </location>
    <ligand>
        <name>GTP</name>
        <dbReference type="ChEBI" id="CHEBI:37565"/>
    </ligand>
</feature>
<feature type="non-terminal residue">
    <location>
        <position position="1"/>
    </location>
</feature>
<feature type="non-terminal residue">
    <location>
        <position position="235"/>
    </location>
</feature>
<gene>
    <name type="primary">tufA</name>
</gene>
<comment type="function">
    <text evidence="2">GTP hydrolase that promotes the GTP-dependent binding of aminoacyl-tRNA to the A-site of ribosomes during protein biosynthesis.</text>
</comment>
<comment type="catalytic activity">
    <reaction evidence="2">
        <text>GTP + H2O = GDP + phosphate + H(+)</text>
        <dbReference type="Rhea" id="RHEA:19669"/>
        <dbReference type="ChEBI" id="CHEBI:15377"/>
        <dbReference type="ChEBI" id="CHEBI:15378"/>
        <dbReference type="ChEBI" id="CHEBI:37565"/>
        <dbReference type="ChEBI" id="CHEBI:43474"/>
        <dbReference type="ChEBI" id="CHEBI:58189"/>
        <dbReference type="EC" id="3.6.5.3"/>
    </reaction>
    <physiologicalReaction direction="left-to-right" evidence="2">
        <dbReference type="Rhea" id="RHEA:19670"/>
    </physiologicalReaction>
</comment>
<comment type="subunit">
    <text evidence="1">Monomer.</text>
</comment>
<comment type="subcellular location">
    <subcellularLocation>
        <location evidence="1">Cytoplasm</location>
    </subcellularLocation>
</comment>
<comment type="similarity">
    <text evidence="3">Belongs to the TRAFAC class translation factor GTPase superfamily. Classic translation factor GTPase family. EF-Tu/EF-1A subfamily.</text>
</comment>
<protein>
    <recommendedName>
        <fullName>Elongation factor Tu</fullName>
        <shortName>EF-Tu</shortName>
        <ecNumber evidence="2">3.6.5.3</ecNumber>
    </recommendedName>
</protein>
<name>EFTU_LEPEC</name>